<evidence type="ECO:0000255" key="1"/>
<evidence type="ECO:0000255" key="2">
    <source>
        <dbReference type="HAMAP-Rule" id="MF_03183"/>
    </source>
</evidence>
<evidence type="ECO:0000256" key="3">
    <source>
        <dbReference type="SAM" id="MobiDB-lite"/>
    </source>
</evidence>
<evidence type="ECO:0000269" key="4">
    <source>
    </source>
</evidence>
<evidence type="ECO:0000269" key="5">
    <source>
    </source>
</evidence>
<evidence type="ECO:0000269" key="6">
    <source>
    </source>
</evidence>
<evidence type="ECO:0000269" key="7">
    <source>
    </source>
</evidence>
<evidence type="ECO:0000269" key="8">
    <source>
    </source>
</evidence>
<evidence type="ECO:0000269" key="9">
    <source>
    </source>
</evidence>
<evidence type="ECO:0000269" key="10">
    <source>
    </source>
</evidence>
<evidence type="ECO:0000269" key="11">
    <source>
    </source>
</evidence>
<evidence type="ECO:0000269" key="12">
    <source>
    </source>
</evidence>
<evidence type="ECO:0000269" key="13">
    <source>
    </source>
</evidence>
<evidence type="ECO:0000269" key="14">
    <source>
    </source>
</evidence>
<evidence type="ECO:0000269" key="15">
    <source>
    </source>
</evidence>
<evidence type="ECO:0000269" key="16">
    <source>
    </source>
</evidence>
<evidence type="ECO:0000269" key="17">
    <source>
    </source>
</evidence>
<evidence type="ECO:0000269" key="18">
    <source>
    </source>
</evidence>
<evidence type="ECO:0000269" key="19">
    <source>
    </source>
</evidence>
<evidence type="ECO:0000269" key="20">
    <source>
    </source>
</evidence>
<evidence type="ECO:0000269" key="21">
    <source>
    </source>
</evidence>
<evidence type="ECO:0000269" key="22">
    <source>
    </source>
</evidence>
<evidence type="ECO:0000269" key="23">
    <source>
    </source>
</evidence>
<evidence type="ECO:0000269" key="24">
    <source>
    </source>
</evidence>
<evidence type="ECO:0000269" key="25">
    <source>
    </source>
</evidence>
<evidence type="ECO:0000269" key="26">
    <source>
    </source>
</evidence>
<evidence type="ECO:0000269" key="27">
    <source>
    </source>
</evidence>
<evidence type="ECO:0000269" key="28">
    <source ref="6"/>
</evidence>
<evidence type="ECO:0000305" key="29"/>
<evidence type="ECO:0000312" key="30">
    <source>
        <dbReference type="EMBL" id="AAM11786.1"/>
    </source>
</evidence>
<evidence type="ECO:0007744" key="31">
    <source>
    </source>
</evidence>
<evidence type="ECO:0007744" key="32">
    <source>
    </source>
</evidence>
<evidence type="ECO:0007744" key="33">
    <source>
    </source>
</evidence>
<evidence type="ECO:0007829" key="34">
    <source>
        <dbReference type="PDB" id="7RDS"/>
    </source>
</evidence>
<evidence type="ECO:0007829" key="35">
    <source>
        <dbReference type="PDB" id="7RDT"/>
    </source>
</evidence>
<sequence length="304" mass="33570">MTALSARMLTRSRSLGPGAGPRGCREEPGPLRRREAAAEARKSHSPVKRPRKAQRLRVAYEGSDSEKGEGAEPLKVPVWEPQDWQQQLVNIRAMRNKKDAPVDHLGTEHCYDSSAPPKVRRYQVLLSLMLSSQTKDQVTAGAMQRLRARGLTVDSILQTDDATLGKLIYPVGFWRSKVKYIKQTSAILQQHYGGDIPASVAELVALPGVGPKMAHLAMAVAWGTVSGIAVDTHVHRIANRLRWTKKATKSPEETRAALEEWLPRELWHEINGLLVGFGQQTCLPVHPRCHACLNQALCPAAQGL</sequence>
<protein>
    <recommendedName>
        <fullName evidence="2">Endonuclease III-like protein 1</fullName>
        <shortName>hNTH1</shortName>
        <ecNumber evidence="2 27">3.2.2.-</ecNumber>
        <ecNumber evidence="2 27">4.2.99.18</ecNumber>
    </recommendedName>
    <alternativeName>
        <fullName evidence="2">Bifunctional DNA N-glycosylase/DNA-(apurinic or apyrimidinic site) lyase</fullName>
        <shortName evidence="2">DNA glycosylase/AP lyase</shortName>
    </alternativeName>
</protein>
<keyword id="KW-0002">3D-structure</keyword>
<keyword id="KW-0004">4Fe-4S</keyword>
<keyword id="KW-0024">Alternative initiation</keyword>
<keyword id="KW-0903">Direct protein sequencing</keyword>
<keyword id="KW-0227">DNA damage</keyword>
<keyword id="KW-0234">DNA repair</keyword>
<keyword id="KW-0326">Glycosidase</keyword>
<keyword id="KW-0378">Hydrolase</keyword>
<keyword id="KW-0408">Iron</keyword>
<keyword id="KW-0411">Iron-sulfur</keyword>
<keyword id="KW-0456">Lyase</keyword>
<keyword id="KW-0479">Metal-binding</keyword>
<keyword id="KW-0496">Mitochondrion</keyword>
<keyword id="KW-0539">Nucleus</keyword>
<keyword id="KW-0597">Phosphoprotein</keyword>
<keyword id="KW-1267">Proteomics identification</keyword>
<keyword id="KW-1185">Reference proteome</keyword>
<keyword id="KW-0809">Transit peptide</keyword>
<keyword id="KW-0832">Ubl conjugation</keyword>
<proteinExistence type="evidence at protein level"/>
<gene>
    <name evidence="2" type="primary">NTHL1</name>
    <name type="synonym">NTH1</name>
    <name type="synonym">OCTS3</name>
</gene>
<reference evidence="29" key="1">
    <citation type="journal article" date="1997" name="J. Biol. Chem.">
        <title>Cloning and expression of the cDNA encoding the human homologue of the DNA repair enzyme, Escherichia coli endonuclease III.</title>
        <authorList>
            <person name="Hilbert T.P."/>
            <person name="Chaung W."/>
            <person name="Boorstein R.J."/>
            <person name="Cunningham R.P."/>
            <person name="Teebor G.W."/>
        </authorList>
    </citation>
    <scope>NUCLEOTIDE SEQUENCE [MRNA] (ISOFORM 2)</scope>
    <scope>FUNCTION</scope>
    <source>
        <tissue>Spleen</tissue>
    </source>
</reference>
<reference evidence="29" key="2">
    <citation type="journal article" date="1997" name="Proc. Natl. Acad. Sci. U.S.A.">
        <title>Cloning and characterization of a functional human homolog of Escherichia coli endonuclease III.</title>
        <authorList>
            <person name="Aspinwall R."/>
            <person name="Rothwell D.G."/>
            <person name="Roldan-Arjona T."/>
            <person name="Anselmino C."/>
            <person name="Ward C.J."/>
            <person name="Cheadle J.P."/>
            <person name="Sampson J.R."/>
            <person name="Lindahl T."/>
            <person name="Harris P.C."/>
            <person name="Hickson I.D."/>
        </authorList>
    </citation>
    <scope>NUCLEOTIDE SEQUENCE [MRNA] (ISOFORM 1)</scope>
    <scope>FUNCTION</scope>
    <scope>TISSUE SPECIFICITY</scope>
</reference>
<reference evidence="29" key="3">
    <citation type="journal article" date="1998" name="Gene">
        <title>Genomic structure and sequence of a human homologue (NTHL1/NTH1) of Escherichia coli endonuclease III with those of the adjacent parts of TSC2 and SLC9A3R2 genes.</title>
        <authorList>
            <person name="Imai K."/>
            <person name="Sarker A.H."/>
            <person name="Akiyama K."/>
            <person name="Ikeda S."/>
            <person name="Yao M."/>
            <person name="Tsutsui K."/>
            <person name="Shohmori T."/>
            <person name="Seki S."/>
        </authorList>
    </citation>
    <scope>NUCLEOTIDE SEQUENCE [GENOMIC DNA / MRNA] (ISOFORM 2)</scope>
    <scope>TISSUE SPECIFICITY</scope>
    <source>
        <tissue>Placenta</tissue>
    </source>
</reference>
<reference evidence="29" key="4">
    <citation type="journal article" date="1998" name="J. Biol. Chem.">
        <title>Purification and characterization of human NTH1, a homolog of Escherichia coli endonuclease III. Direct identification of Lys-212 as the active nucleophilic residue.</title>
        <authorList>
            <person name="Ikeda S."/>
            <person name="Biswas T."/>
            <person name="Roy R."/>
            <person name="Izumi T."/>
            <person name="Boldogh I."/>
            <person name="Kurosky A."/>
            <person name="Sarker A.H."/>
            <person name="Seki S."/>
            <person name="Mitra S."/>
        </authorList>
    </citation>
    <scope>NUCLEOTIDE SEQUENCE [MRNA] (ISOFORM 2)</scope>
    <scope>FUNCTION</scope>
    <scope>ACTIVE SITE</scope>
    <scope>MUTAGENESIS OF LYS-212</scope>
    <source>
        <tissue>Bone marrow</tissue>
    </source>
</reference>
<reference evidence="29" key="5">
    <citation type="journal article" date="2000" name="Mutat. Res.">
        <title>Cell-cycle regulation, intracellular sorting and induced overexpression of the human NTH1 DNA glycosylase involved in removal of formamidopyrimidine residues from DNA.</title>
        <authorList>
            <person name="Luna L."/>
            <person name="Bjoras M."/>
            <person name="Hoff E."/>
            <person name="Rognes T."/>
            <person name="Seeberg E."/>
        </authorList>
    </citation>
    <scope>NUCLEOTIDE SEQUENCE [MRNA] (ISOFORM 2)</scope>
    <scope>FUNCTION</scope>
    <scope>SUBCELLULAR LOCATION</scope>
    <scope>DEVELOPMENTAL STAGE</scope>
</reference>
<reference evidence="29 30" key="6">
    <citation type="submission" date="2002-03" db="EMBL/GenBank/DDBJ databases">
        <authorList>
            <consortium name="NIEHS SNPs program"/>
        </authorList>
    </citation>
    <scope>NUCLEOTIDE SEQUENCE [GENOMIC DNA]</scope>
    <scope>VARIANTS TRP-13 AND LEU-226</scope>
</reference>
<reference key="7">
    <citation type="journal article" date="2004" name="Nature">
        <title>The sequence and analysis of duplication-rich human chromosome 16.</title>
        <authorList>
            <person name="Martin J."/>
            <person name="Han C."/>
            <person name="Gordon L.A."/>
            <person name="Terry A."/>
            <person name="Prabhakar S."/>
            <person name="She X."/>
            <person name="Xie G."/>
            <person name="Hellsten U."/>
            <person name="Chan Y.M."/>
            <person name="Altherr M."/>
            <person name="Couronne O."/>
            <person name="Aerts A."/>
            <person name="Bajorek E."/>
            <person name="Black S."/>
            <person name="Blumer H."/>
            <person name="Branscomb E."/>
            <person name="Brown N.C."/>
            <person name="Bruno W.J."/>
            <person name="Buckingham J.M."/>
            <person name="Callen D.F."/>
            <person name="Campbell C.S."/>
            <person name="Campbell M.L."/>
            <person name="Campbell E.W."/>
            <person name="Caoile C."/>
            <person name="Challacombe J.F."/>
            <person name="Chasteen L.A."/>
            <person name="Chertkov O."/>
            <person name="Chi H.C."/>
            <person name="Christensen M."/>
            <person name="Clark L.M."/>
            <person name="Cohn J.D."/>
            <person name="Denys M."/>
            <person name="Detter J.C."/>
            <person name="Dickson M."/>
            <person name="Dimitrijevic-Bussod M."/>
            <person name="Escobar J."/>
            <person name="Fawcett J.J."/>
            <person name="Flowers D."/>
            <person name="Fotopulos D."/>
            <person name="Glavina T."/>
            <person name="Gomez M."/>
            <person name="Gonzales E."/>
            <person name="Goodstein D."/>
            <person name="Goodwin L.A."/>
            <person name="Grady D.L."/>
            <person name="Grigoriev I."/>
            <person name="Groza M."/>
            <person name="Hammon N."/>
            <person name="Hawkins T."/>
            <person name="Haydu L."/>
            <person name="Hildebrand C.E."/>
            <person name="Huang W."/>
            <person name="Israni S."/>
            <person name="Jett J."/>
            <person name="Jewett P.B."/>
            <person name="Kadner K."/>
            <person name="Kimball H."/>
            <person name="Kobayashi A."/>
            <person name="Krawczyk M.-C."/>
            <person name="Leyba T."/>
            <person name="Longmire J.L."/>
            <person name="Lopez F."/>
            <person name="Lou Y."/>
            <person name="Lowry S."/>
            <person name="Ludeman T."/>
            <person name="Manohar C.F."/>
            <person name="Mark G.A."/>
            <person name="McMurray K.L."/>
            <person name="Meincke L.J."/>
            <person name="Morgan J."/>
            <person name="Moyzis R.K."/>
            <person name="Mundt M.O."/>
            <person name="Munk A.C."/>
            <person name="Nandkeshwar R.D."/>
            <person name="Pitluck S."/>
            <person name="Pollard M."/>
            <person name="Predki P."/>
            <person name="Parson-Quintana B."/>
            <person name="Ramirez L."/>
            <person name="Rash S."/>
            <person name="Retterer J."/>
            <person name="Ricke D.O."/>
            <person name="Robinson D.L."/>
            <person name="Rodriguez A."/>
            <person name="Salamov A."/>
            <person name="Saunders E.H."/>
            <person name="Scott D."/>
            <person name="Shough T."/>
            <person name="Stallings R.L."/>
            <person name="Stalvey M."/>
            <person name="Sutherland R.D."/>
            <person name="Tapia R."/>
            <person name="Tesmer J.G."/>
            <person name="Thayer N."/>
            <person name="Thompson L.S."/>
            <person name="Tice H."/>
            <person name="Torney D.C."/>
            <person name="Tran-Gyamfi M."/>
            <person name="Tsai M."/>
            <person name="Ulanovsky L.E."/>
            <person name="Ustaszewska A."/>
            <person name="Vo N."/>
            <person name="White P.S."/>
            <person name="Williams A.L."/>
            <person name="Wills P.L."/>
            <person name="Wu J.-R."/>
            <person name="Wu K."/>
            <person name="Yang J."/>
            <person name="DeJong P."/>
            <person name="Bruce D."/>
            <person name="Doggett N.A."/>
            <person name="Deaven L."/>
            <person name="Schmutz J."/>
            <person name="Grimwood J."/>
            <person name="Richardson P."/>
            <person name="Rokhsar D.S."/>
            <person name="Eichler E.E."/>
            <person name="Gilna P."/>
            <person name="Lucas S.M."/>
            <person name="Myers R.M."/>
            <person name="Rubin E.M."/>
            <person name="Pennacchio L.A."/>
        </authorList>
    </citation>
    <scope>NUCLEOTIDE SEQUENCE [LARGE SCALE GENOMIC DNA]</scope>
</reference>
<reference key="8">
    <citation type="journal article" date="2004" name="Genome Res.">
        <title>The status, quality, and expansion of the NIH full-length cDNA project: the Mammalian Gene Collection (MGC).</title>
        <authorList>
            <consortium name="The MGC Project Team"/>
        </authorList>
    </citation>
    <scope>NUCLEOTIDE SEQUENCE [LARGE SCALE MRNA] (ISOFORM 2)</scope>
    <source>
        <tissue>Lung</tissue>
    </source>
</reference>
<reference key="9">
    <citation type="journal article" date="2002" name="J. Mol. Biol.">
        <title>Truncation of amino-terminal tail stimulates activity of human endonuclease III (hNTH1).</title>
        <authorList>
            <person name="Liu X."/>
            <person name="Roy R."/>
        </authorList>
    </citation>
    <scope>PROTEIN SEQUENCE OF 23-29; 40-48; 53-70; 99-105; 120-126 AND 213-219</scope>
    <scope>FUNCTION</scope>
    <scope>CATALYTIC ACTIVITY</scope>
</reference>
<reference key="10">
    <citation type="journal article" date="1998" name="Nucleic Acids Res.">
        <title>Mitochondrial targeting of human DNA glycosylases for repair of oxidative DNA damage.</title>
        <authorList>
            <person name="Takao M."/>
            <person name="Aburatani H."/>
            <person name="Kobayashi K."/>
            <person name="Yasui A."/>
        </authorList>
    </citation>
    <scope>SUBCELLULAR LOCATION</scope>
</reference>
<reference key="11">
    <citation type="journal article" date="1999" name="Biochemistry">
        <title>Excision of products of oxidative DNA base damage by human NTH1 protein.</title>
        <authorList>
            <person name="Dizdaroglu M."/>
            <person name="Karahalil B."/>
            <person name="Senturker S."/>
            <person name="Buckley T.J."/>
            <person name="Roldan-Arjona T."/>
        </authorList>
    </citation>
    <scope>FUNCTION</scope>
    <scope>BIOPHYSICOCHEMICAL PROPERTIES</scope>
</reference>
<reference key="12">
    <citation type="journal article" date="1999" name="Nucleic Acids Res.">
        <title>Nucleotide excision repair 3' endonuclease XPG stimulates the activity of base excision repair enzyme thymine glycol DNA glycosylase.</title>
        <authorList>
            <person name="Bessho T."/>
        </authorList>
    </citation>
    <scope>FUNCTION</scope>
    <scope>CATALYTIC ACTIVITY</scope>
    <scope>ACTIVITY REGULATION</scope>
    <scope>INTERACTION WITH ERCC5</scope>
</reference>
<reference key="13">
    <citation type="journal article" date="2001" name="Biochemistry">
        <title>Human endonuclease III acts preferentially on DNA damage opposite guanine residues in DNA.</title>
        <authorList>
            <person name="Eide L."/>
            <person name="Luna L."/>
            <person name="Gustad E.C."/>
            <person name="Henderson P.T."/>
            <person name="Essigmann J.M."/>
            <person name="Demple B."/>
            <person name="Seeberg E."/>
        </authorList>
    </citation>
    <scope>FUNCTION</scope>
    <scope>BIOPHYSICOCHEMICAL PROPERTIES</scope>
</reference>
<reference key="14">
    <citation type="journal article" date="2001" name="Biochemistry">
        <title>Mutation at active site lysine 212 to arginine uncouples the glycosylase activity from the lyase activity of human endonuclease III.</title>
        <authorList>
            <person name="Liu X."/>
            <person name="Roy R."/>
        </authorList>
    </citation>
    <scope>FUNCTION</scope>
    <scope>MUTAGENESIS OF LYS-212</scope>
</reference>
<reference key="15">
    <citation type="journal article" date="2001" name="J. Biol. Chem.">
        <title>Stimulation of human endonuclease III by Y box-binding protein 1 (DNA-binding protein B). Interaction between a base excision repair enzyme and a transcription factor.</title>
        <authorList>
            <person name="Marenstein D.R."/>
            <person name="Ocampo M.T."/>
            <person name="Chan M.K."/>
            <person name="Altamirano A."/>
            <person name="Basu A.K."/>
            <person name="Boorstein R.J."/>
            <person name="Cunningham R.P."/>
            <person name="Teebor G.W."/>
        </authorList>
    </citation>
    <scope>CATALYTIC ACTIVITY</scope>
    <scope>INTERACTION WITH YBX1</scope>
    <scope>ACTIVITY REGULATION</scope>
</reference>
<reference key="16">
    <citation type="journal article" date="2001" name="Nucleic Acids Res.">
        <title>Escherichia coli Nth and human hNTH1 DNA glycosylases are involved in removal of 8-oxoguanine from 8-oxoguanine/guanine mispairs in DNA.</title>
        <authorList>
            <person name="Matsumoto Y."/>
            <person name="Zhang Q.M."/>
            <person name="Takao M."/>
            <person name="Yasui A."/>
            <person name="Yonei S."/>
        </authorList>
    </citation>
    <scope>FUNCTION</scope>
</reference>
<reference evidence="29" key="17">
    <citation type="journal article" date="2002" name="DNA Repair">
        <title>Differential intracellular localization of the human and mouse endonuclease III homologs and analysis of the sorting signals.</title>
        <authorList>
            <person name="Ikeda S."/>
            <person name="Kohmoto T."/>
            <person name="Tabata R."/>
            <person name="Seki Y."/>
        </authorList>
    </citation>
    <scope>SUBCELLULAR LOCATION</scope>
    <scope>ALTERNATIVE INITIATION</scope>
    <scope>MUTAGENESIS OF 32-ARG--ARG-34; ARG-34 AND ARG-49</scope>
</reference>
<reference key="18">
    <citation type="journal article" date="2002" name="Nucleic Acids Res.">
        <title>Identification of 5-formyluracil DNA glycosylase activity of human hNTH1 protein.</title>
        <authorList>
            <person name="Miyabe I."/>
            <person name="Zhang Q.M."/>
            <person name="Kino K."/>
            <person name="Sugiyama H."/>
            <person name="Takao M."/>
            <person name="Yasui A."/>
            <person name="Yonei S."/>
        </authorList>
    </citation>
    <scope>FUNCTION</scope>
    <scope>CATALYTIC ACTIVITY</scope>
</reference>
<reference key="19">
    <citation type="journal article" date="2003" name="J. Biol. Chem.">
        <title>Substrate specificity of human endonuclease III (hNTH1). Effect of human APE1 on hNTH1 activity.</title>
        <authorList>
            <person name="Marenstein D.R."/>
            <person name="Chan M.K."/>
            <person name="Altamirano A."/>
            <person name="Basu A.K."/>
            <person name="Boorstein R.J."/>
            <person name="Cunningham R.P."/>
            <person name="Teebor G.W."/>
        </authorList>
    </citation>
    <scope>FUNCTION</scope>
    <scope>SUBSTRATES</scope>
    <scope>ACTIVITY REGULATION</scope>
</reference>
<reference key="20">
    <citation type="journal article" date="2004" name="J. Biol. Chem.">
        <title>Differential specificity of human and Escherichia coli endonuclease III and VIII homologues for oxidative base lesions.</title>
        <authorList>
            <person name="Katafuchi A."/>
            <person name="Nakano T."/>
            <person name="Masaoka A."/>
            <person name="Terato H."/>
            <person name="Iwai S."/>
            <person name="Hanaoka F."/>
            <person name="Ide H."/>
        </authorList>
    </citation>
    <scope>FUNCTION</scope>
    <scope>SUBSTRATES</scope>
</reference>
<reference key="21">
    <citation type="journal article" date="2005" name="DNA Repair">
        <title>DNA glycosylase activities for thymine residues oxidized in the methyl group are functions of the hNEIL1 and hNTH1 enzymes in human cells.</title>
        <authorList>
            <person name="Zhang Q.M."/>
            <person name="Yonekura S."/>
            <person name="Takao M."/>
            <person name="Yasui A."/>
            <person name="Sugiyama H."/>
            <person name="Yonei S."/>
        </authorList>
    </citation>
    <scope>FUNCTION</scope>
    <scope>SUBSTRATES</scope>
</reference>
<reference key="22">
    <citation type="journal article" date="2007" name="Mol. Cell. Biol.">
        <title>Initiation of base excision repair of oxidative lesions in nucleosomes by the human, bifunctional DNA glycosylase NTH1.</title>
        <authorList>
            <person name="Prasad A."/>
            <person name="Wallace S.S."/>
            <person name="Pederson D.S."/>
        </authorList>
    </citation>
    <scope>FUNCTION</scope>
</reference>
<reference key="23">
    <citation type="journal article" date="2008" name="Proc. Natl. Acad. Sci. U.S.A.">
        <title>A quantitative atlas of mitotic phosphorylation.</title>
        <authorList>
            <person name="Dephoure N."/>
            <person name="Zhou C."/>
            <person name="Villen J."/>
            <person name="Beausoleil S.A."/>
            <person name="Bakalarski C.E."/>
            <person name="Elledge S.J."/>
            <person name="Gygi S.P."/>
        </authorList>
    </citation>
    <scope>IDENTIFICATION BY MASS SPECTROMETRY [LARGE SCALE ANALYSIS]</scope>
    <source>
        <tissue>Cervix carcinoma</tissue>
    </source>
</reference>
<reference key="24">
    <citation type="journal article" date="2010" name="DNA Repair">
        <title>Non-specific DNA binding interferes with the efficient excision of oxidative lesions from chromatin by the human DNA glycosylase, NEIL1.</title>
        <authorList>
            <person name="Odell I.D."/>
            <person name="Newick K."/>
            <person name="Heintz N.H."/>
            <person name="Wallace S.S."/>
            <person name="Pederson D.S."/>
        </authorList>
    </citation>
    <scope>FUNCTION</scope>
</reference>
<reference key="25">
    <citation type="journal article" date="2010" name="Nucleic Acids Res.">
        <title>Fluorescent probes for the analysis of DNA strand scission in base excision repair.</title>
        <authorList>
            <person name="Matsumoto N."/>
            <person name="Toga T."/>
            <person name="Hayashi R."/>
            <person name="Sugasawa K."/>
            <person name="Katayanagi K."/>
            <person name="Ide H."/>
            <person name="Kuraoka I."/>
            <person name="Iwai S."/>
        </authorList>
    </citation>
    <scope>FUNCTION</scope>
</reference>
<reference key="26">
    <citation type="journal article" date="2010" name="Sci. Signal.">
        <title>Quantitative phosphoproteomics reveals widespread full phosphorylation site occupancy during mitosis.</title>
        <authorList>
            <person name="Olsen J.V."/>
            <person name="Vermeulen M."/>
            <person name="Santamaria A."/>
            <person name="Kumar C."/>
            <person name="Miller M.L."/>
            <person name="Jensen L.J."/>
            <person name="Gnad F."/>
            <person name="Cox J."/>
            <person name="Jensen T.S."/>
            <person name="Nigg E.A."/>
            <person name="Brunak S."/>
            <person name="Mann M."/>
        </authorList>
    </citation>
    <scope>PHOSPHORYLATION [LARGE SCALE ANALYSIS] AT SER-63</scope>
    <scope>IDENTIFICATION BY MASS SPECTROMETRY [LARGE SCALE ANALYSIS]</scope>
    <source>
        <tissue>Cervix carcinoma</tissue>
    </source>
</reference>
<reference key="27">
    <citation type="journal article" date="2011" name="Mol. Cell. Biol.">
        <title>Nucleosome disruption by DNA ligase III-XRCC1 promotes efficient base excision repair.</title>
        <authorList>
            <person name="Odell I.D."/>
            <person name="Barbour J.E."/>
            <person name="Murphy D.L."/>
            <person name="Della-Maria J.A."/>
            <person name="Sweasy J.B."/>
            <person name="Tomkinson A.E."/>
            <person name="Wallace S.S."/>
            <person name="Pederson D.S."/>
        </authorList>
    </citation>
    <scope>FUNCTION</scope>
</reference>
<reference key="28">
    <citation type="journal article" date="2011" name="Sci. Signal.">
        <title>System-wide temporal characterization of the proteome and phosphoproteome of human embryonic stem cell differentiation.</title>
        <authorList>
            <person name="Rigbolt K.T."/>
            <person name="Prokhorova T.A."/>
            <person name="Akimov V."/>
            <person name="Henningsen J."/>
            <person name="Johansen P.T."/>
            <person name="Kratchmarova I."/>
            <person name="Kassem M."/>
            <person name="Mann M."/>
            <person name="Olsen J.V."/>
            <person name="Blagoev B."/>
        </authorList>
    </citation>
    <scope>PHOSPHORYLATION [LARGE SCALE ANALYSIS] AT SER-63 AND SER-65</scope>
    <scope>IDENTIFICATION BY MASS SPECTROMETRY [LARGE SCALE ANALYSIS]</scope>
</reference>
<reference key="29">
    <citation type="journal article" date="2013" name="J. Proteome Res.">
        <title>Toward a comprehensive characterization of a human cancer cell phosphoproteome.</title>
        <authorList>
            <person name="Zhou H."/>
            <person name="Di Palma S."/>
            <person name="Preisinger C."/>
            <person name="Peng M."/>
            <person name="Polat A.N."/>
            <person name="Heck A.J."/>
            <person name="Mohammed S."/>
        </authorList>
    </citation>
    <scope>PHOSPHORYLATION [LARGE SCALE ANALYSIS] AT SER-63</scope>
    <scope>IDENTIFICATION BY MASS SPECTROMETRY [LARGE SCALE ANALYSIS]</scope>
    <source>
        <tissue>Cervix carcinoma</tissue>
        <tissue>Erythroleukemia</tissue>
    </source>
</reference>
<reference key="30">
    <citation type="journal article" date="2014" name="J. Proteomics">
        <title>An enzyme assisted RP-RPLC approach for in-depth analysis of human liver phosphoproteome.</title>
        <authorList>
            <person name="Bian Y."/>
            <person name="Song C."/>
            <person name="Cheng K."/>
            <person name="Dong M."/>
            <person name="Wang F."/>
            <person name="Huang J."/>
            <person name="Sun D."/>
            <person name="Wang L."/>
            <person name="Ye M."/>
            <person name="Zou H."/>
        </authorList>
    </citation>
    <scope>IDENTIFICATION BY MASS SPECTROMETRY [LARGE SCALE ANALYSIS]</scope>
    <source>
        <tissue>Liver</tissue>
    </source>
</reference>
<reference key="31">
    <citation type="journal article" date="2015" name="Nat. Genet.">
        <title>A germline homozygous mutation in the base-excision repair gene NTHL1 causes adenomatous polyposis and colorectal cancer.</title>
        <authorList>
            <person name="Weren R.D."/>
            <person name="Ligtenberg M.J."/>
            <person name="Kets C.M."/>
            <person name="de Voer R.M."/>
            <person name="Verwiel E.T."/>
            <person name="Spruijt L."/>
            <person name="van Zelst-Stams W.A."/>
            <person name="Jongmans M.C."/>
            <person name="Gilissen C."/>
            <person name="Hehir-Kwa J.Y."/>
            <person name="Hoischen A."/>
            <person name="Shendure J."/>
            <person name="Boyle E.A."/>
            <person name="Kamping E.J."/>
            <person name="Nagtegaal I.D."/>
            <person name="Tops B.B."/>
            <person name="Nagengast F.M."/>
            <person name="Geurts van Kessel A."/>
            <person name="van Krieken J.H."/>
            <person name="Kuiper R.P."/>
            <person name="Hoogerbrugge N."/>
        </authorList>
    </citation>
    <scope>INVOLVEMENT IN FAP3</scope>
</reference>
<reference key="32">
    <citation type="journal article" date="2018" name="Mol. Cell. Biol.">
        <title>NTH1 Is a New Target for Ubiquitylation-Dependent Regulation by TRIM26 Required for the Cellular Response to Oxidative Stress.</title>
        <authorList>
            <person name="Williams S.C."/>
            <person name="Parsons J.L."/>
        </authorList>
    </citation>
    <scope>FUNCTION</scope>
    <scope>UBIQUITINATION BY TRIM26</scope>
</reference>
<dbReference type="EC" id="3.2.2.-" evidence="2 27"/>
<dbReference type="EC" id="4.2.99.18" evidence="2 27"/>
<dbReference type="EMBL" id="U81285">
    <property type="protein sequence ID" value="AAC51136.1"/>
    <property type="molecule type" value="mRNA"/>
</dbReference>
<dbReference type="EMBL" id="U79718">
    <property type="protein sequence ID" value="AAB41534.1"/>
    <property type="molecule type" value="mRNA"/>
</dbReference>
<dbReference type="EMBL" id="AB014460">
    <property type="protein sequence ID" value="BAA32695.1"/>
    <property type="molecule type" value="Genomic_DNA"/>
</dbReference>
<dbReference type="EMBL" id="AB001575">
    <property type="protein sequence ID" value="BAA19413.1"/>
    <property type="molecule type" value="mRNA"/>
</dbReference>
<dbReference type="EMBL" id="Y09687">
    <property type="protein sequence ID" value="CAA70865.1"/>
    <property type="molecule type" value="mRNA"/>
</dbReference>
<dbReference type="EMBL" id="AF498098">
    <property type="protein sequence ID" value="AAM11786.1"/>
    <property type="molecule type" value="Genomic_DNA"/>
</dbReference>
<dbReference type="EMBL" id="AC005600">
    <property type="protein sequence ID" value="AAC34209.1"/>
    <property type="molecule type" value="Genomic_DNA"/>
</dbReference>
<dbReference type="EMBL" id="BC000391">
    <property type="protein sequence ID" value="AAH00391.2"/>
    <property type="status" value="ALT_INIT"/>
    <property type="molecule type" value="mRNA"/>
</dbReference>
<dbReference type="EMBL" id="BC003014">
    <property type="protein sequence ID" value="AAH03014.1"/>
    <property type="molecule type" value="mRNA"/>
</dbReference>
<dbReference type="CCDS" id="CCDS10457.2">
    <molecule id="P78549-2"/>
</dbReference>
<dbReference type="RefSeq" id="NP_001305122.1">
    <property type="nucleotide sequence ID" value="NM_001318193.1"/>
</dbReference>
<dbReference type="RefSeq" id="NP_001305123.1">
    <property type="nucleotide sequence ID" value="NM_001318194.1"/>
</dbReference>
<dbReference type="RefSeq" id="NP_002519.2">
    <molecule id="P78549-2"/>
    <property type="nucleotide sequence ID" value="NM_002528.7"/>
</dbReference>
<dbReference type="PDB" id="7RDS">
    <property type="method" value="X-ray"/>
    <property type="resolution" value="2.50 A"/>
    <property type="chains" value="A=56-304"/>
</dbReference>
<dbReference type="PDB" id="7RDT">
    <property type="method" value="X-ray"/>
    <property type="resolution" value="2.10 A"/>
    <property type="chains" value="A=56-101, A=117-304"/>
</dbReference>
<dbReference type="PDBsum" id="7RDS"/>
<dbReference type="PDBsum" id="7RDT"/>
<dbReference type="SMR" id="P78549"/>
<dbReference type="BioGRID" id="110968">
    <property type="interactions" value="52"/>
</dbReference>
<dbReference type="FunCoup" id="P78549">
    <property type="interactions" value="1623"/>
</dbReference>
<dbReference type="IntAct" id="P78549">
    <property type="interactions" value="21"/>
</dbReference>
<dbReference type="STRING" id="9606.ENSP00000219066"/>
<dbReference type="ChEMBL" id="CHEMBL4523264"/>
<dbReference type="iPTMnet" id="P78549"/>
<dbReference type="PhosphoSitePlus" id="P78549"/>
<dbReference type="BioMuta" id="NTHL1"/>
<dbReference type="DMDM" id="29840795"/>
<dbReference type="jPOST" id="P78549"/>
<dbReference type="MassIVE" id="P78549"/>
<dbReference type="PaxDb" id="9606-ENSP00000219066"/>
<dbReference type="PeptideAtlas" id="P78549"/>
<dbReference type="ProteomicsDB" id="57648">
    <molecule id="P78549-1"/>
</dbReference>
<dbReference type="Pumba" id="P78549"/>
<dbReference type="Antibodypedia" id="23443">
    <property type="antibodies" value="267 antibodies from 29 providers"/>
</dbReference>
<dbReference type="DNASU" id="4913"/>
<dbReference type="Ensembl" id="ENST00000219066.5">
    <molecule id="P78549-1"/>
    <property type="protein sequence ID" value="ENSP00000219066.1"/>
    <property type="gene ID" value="ENSG00000065057.9"/>
</dbReference>
<dbReference type="Ensembl" id="ENST00000651570.2">
    <molecule id="P78549-2"/>
    <property type="protein sequence ID" value="ENSP00000498421.1"/>
    <property type="gene ID" value="ENSG00000065057.9"/>
</dbReference>
<dbReference type="GeneID" id="4913"/>
<dbReference type="KEGG" id="hsa:4913"/>
<dbReference type="MANE-Select" id="ENST00000651570.2">
    <property type="protein sequence ID" value="ENSP00000498421.1"/>
    <property type="RefSeq nucleotide sequence ID" value="NM_002528.7"/>
    <property type="RefSeq protein sequence ID" value="NP_002519.2"/>
</dbReference>
<dbReference type="UCSC" id="uc002col.1">
    <molecule id="P78549-2"/>
    <property type="organism name" value="human"/>
</dbReference>
<dbReference type="AGR" id="HGNC:8028"/>
<dbReference type="CTD" id="4913"/>
<dbReference type="DisGeNET" id="4913"/>
<dbReference type="GeneCards" id="NTHL1"/>
<dbReference type="GeneReviews" id="NTHL1"/>
<dbReference type="HGNC" id="HGNC:8028">
    <property type="gene designation" value="NTHL1"/>
</dbReference>
<dbReference type="HPA" id="ENSG00000065057">
    <property type="expression patterns" value="Low tissue specificity"/>
</dbReference>
<dbReference type="MalaCards" id="NTHL1"/>
<dbReference type="MIM" id="602656">
    <property type="type" value="gene"/>
</dbReference>
<dbReference type="MIM" id="616415">
    <property type="type" value="phenotype"/>
</dbReference>
<dbReference type="neXtProt" id="NX_P78549"/>
<dbReference type="OpenTargets" id="ENSG00000065057"/>
<dbReference type="Orphanet" id="454840">
    <property type="disease" value="NTHL1-related attenuated familial adenomatous polyposis"/>
</dbReference>
<dbReference type="PharmGKB" id="PA31811"/>
<dbReference type="VEuPathDB" id="HostDB:ENSG00000065057"/>
<dbReference type="eggNOG" id="KOG1921">
    <property type="taxonomic scope" value="Eukaryota"/>
</dbReference>
<dbReference type="GeneTree" id="ENSGT00510000047513"/>
<dbReference type="HOGENOM" id="CLU_012862_4_2_1"/>
<dbReference type="InParanoid" id="P78549"/>
<dbReference type="OMA" id="WQQFTHL"/>
<dbReference type="OrthoDB" id="2099276at2759"/>
<dbReference type="PAN-GO" id="P78549">
    <property type="GO annotations" value="5 GO annotations based on evolutionary models"/>
</dbReference>
<dbReference type="PhylomeDB" id="P78549"/>
<dbReference type="TreeFam" id="TF314967"/>
<dbReference type="BRENDA" id="4.2.99.18">
    <property type="organism ID" value="2681"/>
</dbReference>
<dbReference type="PathwayCommons" id="P78549"/>
<dbReference type="Reactome" id="R-HSA-110328">
    <property type="pathway name" value="Recognition and association of DNA glycosylase with site containing an affected pyrimidine"/>
</dbReference>
<dbReference type="Reactome" id="R-HSA-110329">
    <property type="pathway name" value="Cleavage of the damaged pyrimidine"/>
</dbReference>
<dbReference type="Reactome" id="R-HSA-110357">
    <property type="pathway name" value="Displacement of DNA glycosylase by APEX1"/>
</dbReference>
<dbReference type="Reactome" id="R-HSA-9630221">
    <property type="pathway name" value="Defective NTHL1 substrate processing"/>
</dbReference>
<dbReference type="Reactome" id="R-HSA-9630222">
    <property type="pathway name" value="Defective NTHL1 substrate binding"/>
</dbReference>
<dbReference type="SABIO-RK" id="P78549"/>
<dbReference type="SignaLink" id="P78549"/>
<dbReference type="SIGNOR" id="P78549"/>
<dbReference type="BioGRID-ORCS" id="4913">
    <property type="hits" value="20 hits in 1162 CRISPR screens"/>
</dbReference>
<dbReference type="GeneWiki" id="NTHL1"/>
<dbReference type="GenomeRNAi" id="4913"/>
<dbReference type="Pharos" id="P78549">
    <property type="development level" value="Tbio"/>
</dbReference>
<dbReference type="PRO" id="PR:P78549"/>
<dbReference type="Proteomes" id="UP000005640">
    <property type="component" value="Chromosome 16"/>
</dbReference>
<dbReference type="RNAct" id="P78549">
    <property type="molecule type" value="protein"/>
</dbReference>
<dbReference type="Bgee" id="ENSG00000065057">
    <property type="expression patterns" value="Expressed in right lobe of liver and 138 other cell types or tissues"/>
</dbReference>
<dbReference type="ExpressionAtlas" id="P78549">
    <property type="expression patterns" value="baseline and differential"/>
</dbReference>
<dbReference type="GO" id="GO:0005739">
    <property type="term" value="C:mitochondrion"/>
    <property type="evidence" value="ECO:0006056"/>
    <property type="project" value="FlyBase"/>
</dbReference>
<dbReference type="GO" id="GO:0005654">
    <property type="term" value="C:nucleoplasm"/>
    <property type="evidence" value="ECO:0000304"/>
    <property type="project" value="Reactome"/>
</dbReference>
<dbReference type="GO" id="GO:0005634">
    <property type="term" value="C:nucleus"/>
    <property type="evidence" value="ECO:0000314"/>
    <property type="project" value="UniProtKB"/>
</dbReference>
<dbReference type="GO" id="GO:0051539">
    <property type="term" value="F:4 iron, 4 sulfur cluster binding"/>
    <property type="evidence" value="ECO:0007669"/>
    <property type="project" value="UniProtKB-KW"/>
</dbReference>
<dbReference type="GO" id="GO:0140078">
    <property type="term" value="F:class I DNA-(apurinic or apyrimidinic site) endonuclease activity"/>
    <property type="evidence" value="ECO:0000314"/>
    <property type="project" value="FlyBase"/>
</dbReference>
<dbReference type="GO" id="GO:0003684">
    <property type="term" value="F:damaged DNA binding"/>
    <property type="evidence" value="ECO:0000314"/>
    <property type="project" value="UniProtKB"/>
</dbReference>
<dbReference type="GO" id="GO:0019104">
    <property type="term" value="F:DNA N-glycosylase activity"/>
    <property type="evidence" value="ECO:0000314"/>
    <property type="project" value="UniProtKB"/>
</dbReference>
<dbReference type="GO" id="GO:0003906">
    <property type="term" value="F:DNA-(apurinic or apyrimidinic site) endonuclease activity"/>
    <property type="evidence" value="ECO:0000314"/>
    <property type="project" value="UniProtKB"/>
</dbReference>
<dbReference type="GO" id="GO:0003690">
    <property type="term" value="F:double-stranded DNA binding"/>
    <property type="evidence" value="ECO:0000314"/>
    <property type="project" value="UniProtKB"/>
</dbReference>
<dbReference type="GO" id="GO:0004519">
    <property type="term" value="F:endonuclease activity"/>
    <property type="evidence" value="ECO:0000304"/>
    <property type="project" value="ProtInc"/>
</dbReference>
<dbReference type="GO" id="GO:0046872">
    <property type="term" value="F:metal ion binding"/>
    <property type="evidence" value="ECO:0007669"/>
    <property type="project" value="UniProtKB-KW"/>
</dbReference>
<dbReference type="GO" id="GO:0008534">
    <property type="term" value="F:oxidized purine nucleobase lesion DNA N-glycosylase activity"/>
    <property type="evidence" value="ECO:0000304"/>
    <property type="project" value="Reactome"/>
</dbReference>
<dbReference type="GO" id="GO:0000703">
    <property type="term" value="F:oxidized pyrimidine nucleobase lesion DNA N-glycosylase activity"/>
    <property type="evidence" value="ECO:0000318"/>
    <property type="project" value="GO_Central"/>
</dbReference>
<dbReference type="GO" id="GO:0006285">
    <property type="term" value="P:base-excision repair, AP site formation"/>
    <property type="evidence" value="ECO:0000314"/>
    <property type="project" value="UniProtKB"/>
</dbReference>
<dbReference type="GO" id="GO:0045008">
    <property type="term" value="P:depyrimidination"/>
    <property type="evidence" value="ECO:0000304"/>
    <property type="project" value="Reactome"/>
</dbReference>
<dbReference type="GO" id="GO:0006289">
    <property type="term" value="P:nucleotide-excision repair"/>
    <property type="evidence" value="ECO:0000314"/>
    <property type="project" value="UniProtKB"/>
</dbReference>
<dbReference type="CDD" id="cd00056">
    <property type="entry name" value="ENDO3c"/>
    <property type="match status" value="1"/>
</dbReference>
<dbReference type="FunFam" id="1.10.1670.10:FF:000003">
    <property type="entry name" value="Endonuclease III homolog"/>
    <property type="match status" value="1"/>
</dbReference>
<dbReference type="FunFam" id="1.10.340.30:FF:000005">
    <property type="entry name" value="Endonuclease III-like protein 1"/>
    <property type="match status" value="1"/>
</dbReference>
<dbReference type="Gene3D" id="1.10.1670.10">
    <property type="entry name" value="Helix-hairpin-Helix base-excision DNA repair enzymes (C-terminal)"/>
    <property type="match status" value="1"/>
</dbReference>
<dbReference type="Gene3D" id="1.10.340.30">
    <property type="entry name" value="Hypothetical protein, domain 2"/>
    <property type="match status" value="1"/>
</dbReference>
<dbReference type="HAMAP" id="MF_03183">
    <property type="entry name" value="Endonuclease_III_Nth"/>
    <property type="match status" value="1"/>
</dbReference>
<dbReference type="InterPro" id="IPR011257">
    <property type="entry name" value="DNA_glycosylase"/>
</dbReference>
<dbReference type="InterPro" id="IPR004036">
    <property type="entry name" value="Endonuclease-III-like_CS2"/>
</dbReference>
<dbReference type="InterPro" id="IPR003651">
    <property type="entry name" value="Endonuclease3_FeS-loop_motif"/>
</dbReference>
<dbReference type="InterPro" id="IPR003265">
    <property type="entry name" value="HhH-GPD_domain"/>
</dbReference>
<dbReference type="InterPro" id="IPR023170">
    <property type="entry name" value="HhH_base_excis_C"/>
</dbReference>
<dbReference type="InterPro" id="IPR000445">
    <property type="entry name" value="HhH_motif"/>
</dbReference>
<dbReference type="InterPro" id="IPR030841">
    <property type="entry name" value="NTH1"/>
</dbReference>
<dbReference type="PANTHER" id="PTHR43286">
    <property type="entry name" value="ENDONUCLEASE III-LIKE PROTEIN 1"/>
    <property type="match status" value="1"/>
</dbReference>
<dbReference type="PANTHER" id="PTHR43286:SF1">
    <property type="entry name" value="ENDONUCLEASE III-LIKE PROTEIN 1"/>
    <property type="match status" value="1"/>
</dbReference>
<dbReference type="Pfam" id="PF00633">
    <property type="entry name" value="HHH"/>
    <property type="match status" value="1"/>
</dbReference>
<dbReference type="Pfam" id="PF00730">
    <property type="entry name" value="HhH-GPD"/>
    <property type="match status" value="1"/>
</dbReference>
<dbReference type="SMART" id="SM00478">
    <property type="entry name" value="ENDO3c"/>
    <property type="match status" value="1"/>
</dbReference>
<dbReference type="SMART" id="SM00525">
    <property type="entry name" value="FES"/>
    <property type="match status" value="1"/>
</dbReference>
<dbReference type="SUPFAM" id="SSF48150">
    <property type="entry name" value="DNA-glycosylase"/>
    <property type="match status" value="1"/>
</dbReference>
<dbReference type="PROSITE" id="PS01155">
    <property type="entry name" value="ENDONUCLEASE_III_2"/>
    <property type="match status" value="1"/>
</dbReference>
<organism evidence="30">
    <name type="scientific">Homo sapiens</name>
    <name type="common">Human</name>
    <dbReference type="NCBI Taxonomy" id="9606"/>
    <lineage>
        <taxon>Eukaryota</taxon>
        <taxon>Metazoa</taxon>
        <taxon>Chordata</taxon>
        <taxon>Craniata</taxon>
        <taxon>Vertebrata</taxon>
        <taxon>Euteleostomi</taxon>
        <taxon>Mammalia</taxon>
        <taxon>Eutheria</taxon>
        <taxon>Euarchontoglires</taxon>
        <taxon>Primates</taxon>
        <taxon>Haplorrhini</taxon>
        <taxon>Catarrhini</taxon>
        <taxon>Hominidae</taxon>
        <taxon>Homo</taxon>
    </lineage>
</organism>
<name>NTH_HUMAN</name>
<comment type="function">
    <text evidence="2 4 6 7 8 9 10 11 13 14 15 16 17 18 20 21 22 24 26 27">Bifunctional DNA N-glycosylase with associated apurinic/apyrimidinic (AP) lyase function that catalyzes the first step in base excision repair (BER), the primary repair pathway for the repair of oxidative DNA damage (PubMed:29610152, PubMed:9927729). The DNA N-glycosylase activity releases the damaged DNA base from DNA by cleaving the N-glycosidic bond, leaving an AP site. The AP-lyase activity cleaves the phosphodiester bond 3' to the AP site by a beta-elimination. Primarily recognizes and repairs oxidative base damage of pyrimidines. Also has 8-oxo-7,8-dihydroguanine (8-oxoG) DNA glycosylase activity. Acts preferentially on DNA damage opposite guanine residues in DNA. Is able to process lesions in nucleosomes without requiring or inducing nucleosome disruption.</text>
</comment>
<comment type="catalytic activity">
    <reaction evidence="2 5 9 10 27">
        <text>2'-deoxyribonucleotide-(2'-deoxyribose 5'-phosphate)-2'-deoxyribonucleotide-DNA = a 3'-end 2'-deoxyribonucleotide-(2,3-dehydro-2,3-deoxyribose 5'-phosphate)-DNA + a 5'-end 5'-phospho-2'-deoxyribonucleoside-DNA + H(+)</text>
        <dbReference type="Rhea" id="RHEA:66592"/>
        <dbReference type="Rhea" id="RHEA-COMP:13180"/>
        <dbReference type="Rhea" id="RHEA-COMP:16897"/>
        <dbReference type="Rhea" id="RHEA-COMP:17067"/>
        <dbReference type="ChEBI" id="CHEBI:15378"/>
        <dbReference type="ChEBI" id="CHEBI:136412"/>
        <dbReference type="ChEBI" id="CHEBI:157695"/>
        <dbReference type="ChEBI" id="CHEBI:167181"/>
        <dbReference type="EC" id="4.2.99.18"/>
    </reaction>
</comment>
<comment type="cofactor">
    <cofactor evidence="2">
        <name>[4Fe-4S] cluster</name>
        <dbReference type="ChEBI" id="CHEBI:49883"/>
    </cofactor>
    <text evidence="2">Binds 1 [4Fe-4S] cluster. The cluster does not appear to play a role in catalysis, but is probably involved in the proper positioning of the enzyme along the DNA strand.</text>
</comment>
<comment type="activity regulation">
    <text evidence="5 11 27">APE1 displaces NTHL1 from the N-glycosylase-generated AP site in DNA, thereby increasing the turnover of the DNA N-glycosylase activity (PubMed:11287425, PubMed:12519758). AP lyase activity is stimulated by YBX1 (PubMed:11287425). ERCC5/XPG stimulates NTHL1 activity and NTHL1 binding to its DNA substrate (PubMed:9927729).</text>
</comment>
<comment type="biophysicochemical properties">
    <kinetics>
        <KM evidence="7 26">371 nM for 5-hydroxy-6-hydrothymine containing duplex oligonucleotides (N-glycosylase activity)</KM>
        <KM evidence="7 26">1093 nM for 5-hydroxyuracil containing duplex oligonucleotides (N-glycosylase activity)</KM>
        <KM evidence="7 26">548 nM for 5-hydroxycytosine containing duplex oligonucleotides (N-glycosylase activity)</KM>
        <KM evidence="7 26">1101 nM for thymine glycol containing duplex oligonucleotides (N-glycosylase activity)</KM>
        <KM evidence="7 26">718 nM for 5,6-dihydroxycytosine containing duplex oligonucleotides (N-glycosylase activity)</KM>
        <KM evidence="7 26">0.05 nM for 5-hydroxycytosine-G containing duplex oligonucleotides (N-glycosylase activity)</KM>
        <KM evidence="7 26">0.2 nM for 5-hydroxycytosine-A containing duplex oligonucleotides (N-glycosylase activity)</KM>
    </kinetics>
</comment>
<comment type="subunit">
    <text evidence="2 5 27">Interacts with YBX1 (By similarity) (PubMed:11287425). Interacts with ERCC5/XPG; the interaction stimulates NTHL1 activity and NTHL1 binding to its DNA substrate (PubMed:9927729).</text>
</comment>
<comment type="subcellular location">
    <subcellularLocation>
        <location evidence="2 4 12 23">Nucleus</location>
    </subcellularLocation>
    <subcellularLocation>
        <location evidence="2 23">Mitochondrion</location>
    </subcellularLocation>
</comment>
<comment type="alternative products">
    <event type="alternative initiation"/>
    <isoform>
        <id>P78549-2</id>
        <name>2</name>
        <name>M+1</name>
        <sequence type="displayed"/>
    </isoform>
    <isoform>
        <id>P78549-1</id>
        <name>1</name>
        <name>M-8</name>
        <sequence type="described" ref="VSP_062406"/>
    </isoform>
    <isoform>
        <id>P78549-3</id>
        <name>3</name>
        <name>M+8</name>
        <sequence type="described" ref="VSP_062405"/>
    </isoform>
</comment>
<comment type="tissue specificity">
    <text evidence="21 25">Widely expressed with highest levels in heart and lowest levels in lung and liver.</text>
</comment>
<comment type="developmental stage">
    <text evidence="4">Expression levels are regulated during the cell cycle with increased levels during early and mid S-phase.</text>
</comment>
<comment type="PTM">
    <text evidence="20">Ubiquitinated by TRIM26; leading to proteasomal degradation.</text>
</comment>
<comment type="disease" evidence="19">
    <disease id="DI-04455">
        <name>Familial adenomatous polyposis 3</name>
        <acronym>FAP3</acronym>
        <description>A form of familial adenomatous polyposis, a condition characterized by the development of multiple colorectal adenomatous polyps, benign neoplasms derived from glandular epithelium. Some affected individuals may develop colorectal carcinoma.</description>
        <dbReference type="MIM" id="616415"/>
    </disease>
    <text>The disease is caused by variants affecting the gene represented in this entry.</text>
</comment>
<comment type="similarity">
    <text evidence="2">Belongs to the Nth/MutY family.</text>
</comment>
<comment type="sequence caution" evidence="29">
    <conflict type="erroneous initiation">
        <sequence resource="EMBL-CDS" id="AAH00391"/>
    </conflict>
    <text>Extended N-terminus.</text>
</comment>
<feature type="transit peptide" description="Mitochondrion" evidence="2 10">
    <location>
        <begin position="1"/>
        <end position="22"/>
    </location>
</feature>
<feature type="chain" id="PRO_0000102227" description="Endonuclease III-like protein 1">
    <location>
        <begin position="23"/>
        <end position="304"/>
    </location>
</feature>
<feature type="domain" description="HhH" evidence="2">
    <location>
        <begin position="191"/>
        <end position="215"/>
    </location>
</feature>
<feature type="region of interest" description="Disordered" evidence="3">
    <location>
        <begin position="1"/>
        <end position="72"/>
    </location>
</feature>
<feature type="short sequence motif" description="Bipartite nuclear localization signal" evidence="1">
    <location>
        <begin position="28"/>
        <end position="52"/>
    </location>
</feature>
<feature type="compositionally biased region" description="Basic and acidic residues" evidence="3">
    <location>
        <begin position="23"/>
        <end position="42"/>
    </location>
</feature>
<feature type="compositionally biased region" description="Basic residues" evidence="3">
    <location>
        <begin position="43"/>
        <end position="55"/>
    </location>
</feature>
<feature type="active site" description="Nucleophile; for N-glycosylase activity" evidence="2 24">
    <location>
        <position position="212"/>
    </location>
</feature>
<feature type="binding site" evidence="2">
    <location>
        <position position="282"/>
    </location>
    <ligand>
        <name>[4Fe-4S] cluster</name>
        <dbReference type="ChEBI" id="CHEBI:49883"/>
    </ligand>
</feature>
<feature type="binding site" evidence="2">
    <location>
        <position position="289"/>
    </location>
    <ligand>
        <name>[4Fe-4S] cluster</name>
        <dbReference type="ChEBI" id="CHEBI:49883"/>
    </ligand>
</feature>
<feature type="binding site" evidence="2">
    <location>
        <position position="292"/>
    </location>
    <ligand>
        <name>[4Fe-4S] cluster</name>
        <dbReference type="ChEBI" id="CHEBI:49883"/>
    </ligand>
</feature>
<feature type="binding site" evidence="2">
    <location>
        <position position="298"/>
    </location>
    <ligand>
        <name>[4Fe-4S] cluster</name>
        <dbReference type="ChEBI" id="CHEBI:49883"/>
    </ligand>
</feature>
<feature type="site" description="Important for catalytic activity">
    <location>
        <position position="231"/>
    </location>
</feature>
<feature type="modified residue" description="Phosphoserine" evidence="31 32 33">
    <location>
        <position position="63"/>
    </location>
</feature>
<feature type="modified residue" description="Phosphoserine" evidence="32">
    <location>
        <position position="65"/>
    </location>
</feature>
<feature type="splice variant" id="VSP_062405" description="In isoform 3.">
    <location>
        <begin position="1"/>
        <end position="7"/>
    </location>
</feature>
<feature type="splice variant" id="VSP_062406" description="In isoform 1.">
    <original>M</original>
    <variation>MCSPQESGM</variation>
    <location>
        <position position="1"/>
    </location>
</feature>
<feature type="sequence variant" id="VAR_016125" description="In dbSNP:rs3087469." evidence="28">
    <original>R</original>
    <variation>W</variation>
    <location>
        <position position="13"/>
    </location>
</feature>
<feature type="sequence variant" id="VAR_016126" description="In dbSNP:rs2302172.">
    <original>R</original>
    <variation>K</variation>
    <location>
        <position position="25"/>
    </location>
</feature>
<feature type="sequence variant" id="VAR_016127" description="In dbSNP:rs1805378.">
    <original>I</original>
    <variation>T</variation>
    <location>
        <position position="168"/>
    </location>
</feature>
<feature type="sequence variant" id="VAR_029318" description="In dbSNP:rs3211977." evidence="28">
    <original>S</original>
    <variation>L</variation>
    <location>
        <position position="226"/>
    </location>
</feature>
<feature type="sequence variant" id="VAR_016128" description="In dbSNP:rs3087468.">
    <original>D</original>
    <variation>Y</variation>
    <location>
        <position position="231"/>
    </location>
</feature>
<feature type="mutagenesis site" description="Sorted to the cytoplasm." evidence="12">
    <location>
        <begin position="32"/>
        <end position="34"/>
    </location>
</feature>
<feature type="mutagenesis site" description="Sorted to both nuclei and mitochondria." evidence="12">
    <original>R</original>
    <variation>A</variation>
    <location>
        <position position="34"/>
    </location>
</feature>
<feature type="mutagenesis site" description="Sorted to the cytoplasm." evidence="12">
    <original>R</original>
    <variation>D</variation>
    <location>
        <position position="34"/>
    </location>
</feature>
<feature type="mutagenesis site" description="Sorted to both nuclei and mitochondria." evidence="12">
    <original>R</original>
    <variation>A</variation>
    <variation>D</variation>
    <location>
        <position position="49"/>
    </location>
</feature>
<feature type="mutagenesis site" description="Inactivates enzyme." evidence="8 24">
    <original>K</original>
    <variation>Q</variation>
    <location>
        <position position="212"/>
    </location>
</feature>
<feature type="mutagenesis site" description="85-fold reduction in activity. Uncouples the glycosylase activity from the lyase activity. Shows glycosylase activity without any detectable AP-lyase activity during the first 10 minutes of the reaction." evidence="8 24">
    <original>K</original>
    <variation>R</variation>
    <location>
        <position position="212"/>
    </location>
</feature>
<feature type="sequence conflict" description="In Ref. 5; CAA70865." evidence="29" ref="5">
    <original>MT</original>
    <variation>TS</variation>
    <location>
        <begin position="1"/>
        <end position="2"/>
    </location>
</feature>
<feature type="sequence conflict" description="In Ref. 5; CAA70865." evidence="29" ref="5">
    <location>
        <position position="70"/>
    </location>
</feature>
<feature type="sequence conflict" description="In Ref. 2; AAB41534." evidence="29" ref="2">
    <original>M</original>
    <variation>I</variation>
    <location>
        <position position="143"/>
    </location>
</feature>
<feature type="sequence conflict" description="In Ref. 2; AAB41534." evidence="29" ref="2">
    <original>T</original>
    <variation>A</variation>
    <location>
        <position position="152"/>
    </location>
</feature>
<feature type="helix" evidence="35">
    <location>
        <begin position="84"/>
        <end position="94"/>
    </location>
</feature>
<feature type="turn" evidence="34">
    <location>
        <begin position="95"/>
        <end position="97"/>
    </location>
</feature>
<feature type="helix" evidence="34">
    <location>
        <begin position="101"/>
        <end position="106"/>
    </location>
</feature>
<feature type="helix" evidence="35">
    <location>
        <begin position="117"/>
        <end position="130"/>
    </location>
</feature>
<feature type="helix" evidence="35">
    <location>
        <begin position="136"/>
        <end position="149"/>
    </location>
</feature>
<feature type="helix" evidence="35">
    <location>
        <begin position="153"/>
        <end position="157"/>
    </location>
</feature>
<feature type="helix" evidence="35">
    <location>
        <begin position="161"/>
        <end position="168"/>
    </location>
</feature>
<feature type="helix" evidence="35">
    <location>
        <begin position="174"/>
        <end position="191"/>
    </location>
</feature>
<feature type="helix" evidence="35">
    <location>
        <begin position="200"/>
        <end position="203"/>
    </location>
</feature>
<feature type="helix" evidence="35">
    <location>
        <begin position="211"/>
        <end position="222"/>
    </location>
</feature>
<feature type="helix" evidence="35">
    <location>
        <begin position="232"/>
        <end position="240"/>
    </location>
</feature>
<feature type="strand" evidence="35">
    <location>
        <begin position="244"/>
        <end position="246"/>
    </location>
</feature>
<feature type="helix" evidence="35">
    <location>
        <begin position="251"/>
        <end position="259"/>
    </location>
</feature>
<feature type="helix" evidence="35">
    <location>
        <begin position="264"/>
        <end position="266"/>
    </location>
</feature>
<feature type="helix" evidence="35">
    <location>
        <begin position="269"/>
        <end position="280"/>
    </location>
</feature>
<feature type="strand" evidence="35">
    <location>
        <begin position="284"/>
        <end position="286"/>
    </location>
</feature>
<feature type="helix" evidence="35">
    <location>
        <begin position="289"/>
        <end position="291"/>
    </location>
</feature>
<feature type="helix" evidence="35">
    <location>
        <begin position="295"/>
        <end position="297"/>
    </location>
</feature>
<feature type="helix" evidence="35">
    <location>
        <begin position="299"/>
        <end position="302"/>
    </location>
</feature>
<accession>P78549</accession>
<accession>Q1MVR1</accession>
<accession>Q99566</accession>
<accession>Q99794</accession>
<accession>Q9BPX2</accession>